<dbReference type="EMBL" id="AL123456">
    <property type="protein sequence ID" value="CCP43836.1"/>
    <property type="molecule type" value="Genomic_DNA"/>
</dbReference>
<dbReference type="PIR" id="C70895">
    <property type="entry name" value="C70895"/>
</dbReference>
<dbReference type="RefSeq" id="NP_215601.1">
    <property type="nucleotide sequence ID" value="NC_000962.3"/>
</dbReference>
<dbReference type="SMR" id="P9WFN7"/>
<dbReference type="FunCoup" id="P9WFN7">
    <property type="interactions" value="47"/>
</dbReference>
<dbReference type="STRING" id="83332.Rv1085c"/>
<dbReference type="PaxDb" id="83332-Rv1085c"/>
<dbReference type="DNASU" id="887107"/>
<dbReference type="GeneID" id="887107"/>
<dbReference type="KEGG" id="mtu:Rv1085c"/>
<dbReference type="KEGG" id="mtv:RVBD_1085c"/>
<dbReference type="TubercuList" id="Rv1085c"/>
<dbReference type="eggNOG" id="COG1272">
    <property type="taxonomic scope" value="Bacteria"/>
</dbReference>
<dbReference type="InParanoid" id="P9WFN7"/>
<dbReference type="OrthoDB" id="9813689at2"/>
<dbReference type="PhylomeDB" id="P9WFN7"/>
<dbReference type="Proteomes" id="UP000001584">
    <property type="component" value="Chromosome"/>
</dbReference>
<dbReference type="GO" id="GO:0005886">
    <property type="term" value="C:plasma membrane"/>
    <property type="evidence" value="ECO:0007669"/>
    <property type="project" value="UniProtKB-SubCell"/>
</dbReference>
<dbReference type="GO" id="GO:0140911">
    <property type="term" value="F:pore-forming activity"/>
    <property type="evidence" value="ECO:0007669"/>
    <property type="project" value="InterPro"/>
</dbReference>
<dbReference type="InterPro" id="IPR004254">
    <property type="entry name" value="AdipoR/HlyIII-related"/>
</dbReference>
<dbReference type="InterPro" id="IPR005744">
    <property type="entry name" value="Hy-lIII"/>
</dbReference>
<dbReference type="NCBIfam" id="TIGR01065">
    <property type="entry name" value="hlyIII"/>
    <property type="match status" value="1"/>
</dbReference>
<dbReference type="PANTHER" id="PTHR20855">
    <property type="entry name" value="ADIPOR/PROGESTIN RECEPTOR-RELATED"/>
    <property type="match status" value="1"/>
</dbReference>
<dbReference type="PANTHER" id="PTHR20855:SF3">
    <property type="entry name" value="LD03007P"/>
    <property type="match status" value="1"/>
</dbReference>
<dbReference type="Pfam" id="PF03006">
    <property type="entry name" value="HlyIII"/>
    <property type="match status" value="1"/>
</dbReference>
<sequence length="242" mass="26034">MSGQADTATTAEARTPAHAAHHLVEGVARVLTKPRFRGWIHVYSAGTAVLAGASLVAVSWAVGSAKAGLTTLAYTAATITMFTVSATYHRVNWKSATARNWMKRADHSMIFVFIAGSYTPFALLALPAHDGRVVLSIVWGGAIAGILLKMCWPAAPRSVGVPLYLLLGWVAVWYTATILHNAGVTALVLLFVGGALYSIGGILYAVRWPDPWPTTFGYHEFFHACTAVAAICHYIAMWFVVF</sequence>
<gene>
    <name type="ordered locus">Rv1085c</name>
    <name type="ORF">MTV017.38c</name>
</gene>
<organism>
    <name type="scientific">Mycobacterium tuberculosis (strain ATCC 25618 / H37Rv)</name>
    <dbReference type="NCBI Taxonomy" id="83332"/>
    <lineage>
        <taxon>Bacteria</taxon>
        <taxon>Bacillati</taxon>
        <taxon>Actinomycetota</taxon>
        <taxon>Actinomycetes</taxon>
        <taxon>Mycobacteriales</taxon>
        <taxon>Mycobacteriaceae</taxon>
        <taxon>Mycobacterium</taxon>
        <taxon>Mycobacterium tuberculosis complex</taxon>
    </lineage>
</organism>
<keyword id="KW-1003">Cell membrane</keyword>
<keyword id="KW-0472">Membrane</keyword>
<keyword id="KW-1185">Reference proteome</keyword>
<keyword id="KW-0812">Transmembrane</keyword>
<keyword id="KW-1133">Transmembrane helix</keyword>
<feature type="chain" id="PRO_0000176902" description="UPF0073 membrane protein Rv1085c">
    <location>
        <begin position="1"/>
        <end position="242"/>
    </location>
</feature>
<feature type="transmembrane region" description="Helical" evidence="1">
    <location>
        <begin position="42"/>
        <end position="62"/>
    </location>
</feature>
<feature type="transmembrane region" description="Helical" evidence="1">
    <location>
        <begin position="67"/>
        <end position="87"/>
    </location>
</feature>
<feature type="transmembrane region" description="Helical" evidence="1">
    <location>
        <begin position="108"/>
        <end position="128"/>
    </location>
</feature>
<feature type="transmembrane region" description="Helical" evidence="1">
    <location>
        <begin position="133"/>
        <end position="153"/>
    </location>
</feature>
<feature type="transmembrane region" description="Helical" evidence="1">
    <location>
        <begin position="159"/>
        <end position="179"/>
    </location>
</feature>
<feature type="transmembrane region" description="Helical" evidence="1">
    <location>
        <begin position="186"/>
        <end position="206"/>
    </location>
</feature>
<feature type="transmembrane region" description="Helical" evidence="1">
    <location>
        <begin position="222"/>
        <end position="242"/>
    </location>
</feature>
<comment type="subcellular location">
    <subcellularLocation>
        <location evidence="2">Cell membrane</location>
        <topology evidence="2">Multi-pass membrane protein</topology>
    </subcellularLocation>
</comment>
<comment type="similarity">
    <text evidence="2">Belongs to the UPF0073 (Hly-III) family.</text>
</comment>
<reference key="1">
    <citation type="journal article" date="1998" name="Nature">
        <title>Deciphering the biology of Mycobacterium tuberculosis from the complete genome sequence.</title>
        <authorList>
            <person name="Cole S.T."/>
            <person name="Brosch R."/>
            <person name="Parkhill J."/>
            <person name="Garnier T."/>
            <person name="Churcher C.M."/>
            <person name="Harris D.E."/>
            <person name="Gordon S.V."/>
            <person name="Eiglmeier K."/>
            <person name="Gas S."/>
            <person name="Barry C.E. III"/>
            <person name="Tekaia F."/>
            <person name="Badcock K."/>
            <person name="Basham D."/>
            <person name="Brown D."/>
            <person name="Chillingworth T."/>
            <person name="Connor R."/>
            <person name="Davies R.M."/>
            <person name="Devlin K."/>
            <person name="Feltwell T."/>
            <person name="Gentles S."/>
            <person name="Hamlin N."/>
            <person name="Holroyd S."/>
            <person name="Hornsby T."/>
            <person name="Jagels K."/>
            <person name="Krogh A."/>
            <person name="McLean J."/>
            <person name="Moule S."/>
            <person name="Murphy L.D."/>
            <person name="Oliver S."/>
            <person name="Osborne J."/>
            <person name="Quail M.A."/>
            <person name="Rajandream M.A."/>
            <person name="Rogers J."/>
            <person name="Rutter S."/>
            <person name="Seeger K."/>
            <person name="Skelton S."/>
            <person name="Squares S."/>
            <person name="Squares R."/>
            <person name="Sulston J.E."/>
            <person name="Taylor K."/>
            <person name="Whitehead S."/>
            <person name="Barrell B.G."/>
        </authorList>
    </citation>
    <scope>NUCLEOTIDE SEQUENCE [LARGE SCALE GENOMIC DNA]</scope>
    <source>
        <strain>ATCC 25618 / H37Rv</strain>
    </source>
</reference>
<name>Y1085_MYCTU</name>
<evidence type="ECO:0000255" key="1"/>
<evidence type="ECO:0000305" key="2"/>
<protein>
    <recommendedName>
        <fullName>UPF0073 membrane protein Rv1085c</fullName>
    </recommendedName>
</protein>
<proteinExistence type="inferred from homology"/>
<accession>P9WFN7</accession>
<accession>L0T5S7</accession>
<accession>O53433</accession>
<accession>P67157</accession>